<feature type="chain" id="PRO_1000013061" description="Putative membrane protein insertion efficiency factor">
    <location>
        <begin position="1"/>
        <end position="82"/>
    </location>
</feature>
<organism>
    <name type="scientific">Aeromonas salmonicida (strain A449)</name>
    <dbReference type="NCBI Taxonomy" id="382245"/>
    <lineage>
        <taxon>Bacteria</taxon>
        <taxon>Pseudomonadati</taxon>
        <taxon>Pseudomonadota</taxon>
        <taxon>Gammaproteobacteria</taxon>
        <taxon>Aeromonadales</taxon>
        <taxon>Aeromonadaceae</taxon>
        <taxon>Aeromonas</taxon>
    </lineage>
</organism>
<sequence>MAHSVTPLQWVAVKLIRLYQLIISPLLGQRCRFTPTCSQFAIEAIRLHGFIKGVWLASKRLLKCHPLSEGGYDPVPQPKRRN</sequence>
<keyword id="KW-0997">Cell inner membrane</keyword>
<keyword id="KW-1003">Cell membrane</keyword>
<keyword id="KW-0472">Membrane</keyword>
<reference key="1">
    <citation type="journal article" date="2008" name="BMC Genomics">
        <title>The genome of Aeromonas salmonicida subsp. salmonicida A449: insights into the evolution of a fish pathogen.</title>
        <authorList>
            <person name="Reith M.E."/>
            <person name="Singh R.K."/>
            <person name="Curtis B."/>
            <person name="Boyd J.M."/>
            <person name="Bouevitch A."/>
            <person name="Kimball J."/>
            <person name="Munholland J."/>
            <person name="Murphy C."/>
            <person name="Sarty D."/>
            <person name="Williams J."/>
            <person name="Nash J.H."/>
            <person name="Johnson S.C."/>
            <person name="Brown L.L."/>
        </authorList>
    </citation>
    <scope>NUCLEOTIDE SEQUENCE [LARGE SCALE GENOMIC DNA]</scope>
    <source>
        <strain>A449</strain>
    </source>
</reference>
<comment type="function">
    <text evidence="1">Could be involved in insertion of integral membrane proteins into the membrane.</text>
</comment>
<comment type="subcellular location">
    <subcellularLocation>
        <location evidence="1">Cell inner membrane</location>
        <topology evidence="1">Peripheral membrane protein</topology>
        <orientation evidence="1">Cytoplasmic side</orientation>
    </subcellularLocation>
</comment>
<comment type="similarity">
    <text evidence="1">Belongs to the UPF0161 family.</text>
</comment>
<accession>A4STS6</accession>
<gene>
    <name type="ordered locus">ASA_4383</name>
</gene>
<protein>
    <recommendedName>
        <fullName evidence="1">Putative membrane protein insertion efficiency factor</fullName>
    </recommendedName>
</protein>
<name>YIDD_AERS4</name>
<evidence type="ECO:0000255" key="1">
    <source>
        <dbReference type="HAMAP-Rule" id="MF_00386"/>
    </source>
</evidence>
<dbReference type="EMBL" id="CP000644">
    <property type="protein sequence ID" value="ABO92298.1"/>
    <property type="molecule type" value="Genomic_DNA"/>
</dbReference>
<dbReference type="KEGG" id="asa:ASA_4383"/>
<dbReference type="eggNOG" id="COG0759">
    <property type="taxonomic scope" value="Bacteria"/>
</dbReference>
<dbReference type="HOGENOM" id="CLU_144811_5_2_6"/>
<dbReference type="Proteomes" id="UP000000225">
    <property type="component" value="Chromosome"/>
</dbReference>
<dbReference type="GO" id="GO:0005886">
    <property type="term" value="C:plasma membrane"/>
    <property type="evidence" value="ECO:0007669"/>
    <property type="project" value="UniProtKB-SubCell"/>
</dbReference>
<dbReference type="HAMAP" id="MF_00386">
    <property type="entry name" value="UPF0161_YidD"/>
    <property type="match status" value="1"/>
</dbReference>
<dbReference type="InterPro" id="IPR002696">
    <property type="entry name" value="Membr_insert_effic_factor_YidD"/>
</dbReference>
<dbReference type="NCBIfam" id="TIGR00278">
    <property type="entry name" value="membrane protein insertion efficiency factor YidD"/>
    <property type="match status" value="1"/>
</dbReference>
<dbReference type="PANTHER" id="PTHR33383">
    <property type="entry name" value="MEMBRANE PROTEIN INSERTION EFFICIENCY FACTOR-RELATED"/>
    <property type="match status" value="1"/>
</dbReference>
<dbReference type="PANTHER" id="PTHR33383:SF1">
    <property type="entry name" value="MEMBRANE PROTEIN INSERTION EFFICIENCY FACTOR-RELATED"/>
    <property type="match status" value="1"/>
</dbReference>
<dbReference type="Pfam" id="PF01809">
    <property type="entry name" value="YidD"/>
    <property type="match status" value="1"/>
</dbReference>
<dbReference type="SMART" id="SM01234">
    <property type="entry name" value="Haemolytic"/>
    <property type="match status" value="1"/>
</dbReference>
<proteinExistence type="inferred from homology"/>